<sequence length="193" mass="22748">MFKNTFQSGFLSILYSIGSKPLQIWDKKVRNGHIKRITDNDIQSLVLEIEGTNVSTTYITCPADPKKTLGIKLPFLVMIIKNLKKYFTFEVQVLDDKNVRRRFRASNYQSTTRVKPFICTMPMRLDDGWNQIQFNLSDFTRRAYGTNYIETLRVQIHANCRIRRVYFSDRLYSEDELPAEFKLYLPVQNKAKQ</sequence>
<comment type="function">
    <text evidence="1 3">Cilium- and flagellum-specific protein that plays a role in axonemal structure organization and motility (PubMed:34715025). Microtubule inner protein (MIP) part of the dynein-decorated doublet microtubules (DMTs) in cilia axoneme, which is required for motile cilia beating (By similarity). Involved in the regulation of the size and morphology of cilia. Required for axonemal microtubules polyglutamylation (By similarity).</text>
</comment>
<comment type="subunit">
    <text evidence="4">Microtubule inner protein component of sperm flagellar doublet microtubules.</text>
</comment>
<comment type="subcellular location">
    <subcellularLocation>
        <location evidence="1">Nucleus</location>
    </subcellularLocation>
    <subcellularLocation>
        <location evidence="1">Cytoplasm</location>
        <location evidence="1">Cytoskeleton</location>
        <location evidence="1">Microtubule organizing center</location>
        <location evidence="1">Centrosome</location>
        <location evidence="1">Centriole</location>
    </subcellularLocation>
    <subcellularLocation>
        <location evidence="1">Cytoplasm</location>
        <location evidence="1">Cytoskeleton</location>
        <location evidence="1">Cilium basal body</location>
    </subcellularLocation>
    <subcellularLocation>
        <location evidence="3">Cytoplasm</location>
        <location evidence="3">Cytoskeleton</location>
        <location evidence="3">Cilium axoneme</location>
    </subcellularLocation>
    <subcellularLocation>
        <location evidence="4">Cytoplasm</location>
        <location evidence="4">Cytoskeleton</location>
        <location evidence="4">Flagellum axoneme</location>
    </subcellularLocation>
    <text evidence="3">Microtubule inner protein (MIP) part of the dynein-decorated doublet microtubules (DMTs) in cilia axoneme.</text>
</comment>
<comment type="tissue specificity">
    <text evidence="3">Expressed in trachea multiciliated cells.</text>
</comment>
<comment type="developmental stage">
    <text evidence="2">Expressed at high levels in germinal vesicle stage oocytes at the mRNA level. Expression peaks in 2-cell embryos and decreases thereafter. Hardly detectable in morula stage embryos. This pattern of expression suggests a maternally derived transcript.</text>
</comment>
<comment type="similarity">
    <text evidence="6">Belongs to the CFAP20 family.</text>
</comment>
<keyword id="KW-0002">3D-structure</keyword>
<keyword id="KW-0966">Cell projection</keyword>
<keyword id="KW-0969">Cilium</keyword>
<keyword id="KW-0963">Cytoplasm</keyword>
<keyword id="KW-0206">Cytoskeleton</keyword>
<keyword id="KW-0282">Flagellum</keyword>
<keyword id="KW-0493">Microtubule</keyword>
<keyword id="KW-0539">Nucleus</keyword>
<keyword id="KW-1185">Reference proteome</keyword>
<dbReference type="EMBL" id="AY675080">
    <property type="protein sequence ID" value="AAT84373.1"/>
    <property type="molecule type" value="mRNA"/>
</dbReference>
<dbReference type="EMBL" id="BC112831">
    <property type="protein sequence ID" value="AAI12832.1"/>
    <property type="molecule type" value="mRNA"/>
</dbReference>
<dbReference type="RefSeq" id="NP_001003905.1">
    <property type="nucleotide sequence ID" value="NM_001003905.1"/>
</dbReference>
<dbReference type="PDB" id="7RRO">
    <property type="method" value="EM"/>
    <property type="resolution" value="3.40 A"/>
    <property type="chains" value="XA/XB/XC/XD/XE/XF/XG=1-193"/>
</dbReference>
<dbReference type="PDB" id="8OTZ">
    <property type="method" value="EM"/>
    <property type="resolution" value="3.60 A"/>
    <property type="chains" value="XG/XH/XI/XJ/XK/XL/XM=1-193"/>
</dbReference>
<dbReference type="PDB" id="9CPB">
    <property type="method" value="EM"/>
    <property type="resolution" value="3.52 A"/>
    <property type="chains" value="1W/1X/1Y/1Z/2A/2B=1-193"/>
</dbReference>
<dbReference type="PDBsum" id="7RRO"/>
<dbReference type="PDBsum" id="8OTZ"/>
<dbReference type="PDBsum" id="9CPB"/>
<dbReference type="EMDB" id="EMD-17187"/>
<dbReference type="EMDB" id="EMD-24664"/>
<dbReference type="EMDB" id="EMD-45801"/>
<dbReference type="EMDB" id="EMD-50664"/>
<dbReference type="SMR" id="Q6B857"/>
<dbReference type="FunCoup" id="Q6B857">
    <property type="interactions" value="1976"/>
</dbReference>
<dbReference type="STRING" id="9913.ENSBTAP00000018422"/>
<dbReference type="PaxDb" id="9913-ENSBTAP00000018422"/>
<dbReference type="Ensembl" id="ENSBTAT00000018422.6">
    <property type="protein sequence ID" value="ENSBTAP00000018422.4"/>
    <property type="gene ID" value="ENSBTAG00000013874.6"/>
</dbReference>
<dbReference type="GeneID" id="445424"/>
<dbReference type="KEGG" id="bta:445424"/>
<dbReference type="CTD" id="29105"/>
<dbReference type="VEuPathDB" id="HostDB:ENSBTAG00000013874"/>
<dbReference type="VGNC" id="VGNC:27240">
    <property type="gene designation" value="CFAP20"/>
</dbReference>
<dbReference type="eggNOG" id="KOG3213">
    <property type="taxonomic scope" value="Eukaryota"/>
</dbReference>
<dbReference type="GeneTree" id="ENSGT00390000004554"/>
<dbReference type="HOGENOM" id="CLU_060610_1_1_1"/>
<dbReference type="InParanoid" id="Q6B857"/>
<dbReference type="OMA" id="TTYISCP"/>
<dbReference type="OrthoDB" id="7486196at2759"/>
<dbReference type="TreeFam" id="TF313405"/>
<dbReference type="Proteomes" id="UP000009136">
    <property type="component" value="Chromosome 18"/>
</dbReference>
<dbReference type="Bgee" id="ENSBTAG00000013874">
    <property type="expression patterns" value="Expressed in oocyte and 107 other cell types or tissues"/>
</dbReference>
<dbReference type="GO" id="GO:0160112">
    <property type="term" value="C:axonemal B tubule inner sheath"/>
    <property type="evidence" value="ECO:0007669"/>
    <property type="project" value="Ensembl"/>
</dbReference>
<dbReference type="GO" id="GO:0005879">
    <property type="term" value="C:axonemal microtubule"/>
    <property type="evidence" value="ECO:0000314"/>
    <property type="project" value="UniProtKB"/>
</dbReference>
<dbReference type="GO" id="GO:0005814">
    <property type="term" value="C:centriole"/>
    <property type="evidence" value="ECO:0000250"/>
    <property type="project" value="UniProtKB"/>
</dbReference>
<dbReference type="GO" id="GO:0036064">
    <property type="term" value="C:ciliary basal body"/>
    <property type="evidence" value="ECO:0000250"/>
    <property type="project" value="UniProtKB"/>
</dbReference>
<dbReference type="GO" id="GO:0005929">
    <property type="term" value="C:cilium"/>
    <property type="evidence" value="ECO:0000250"/>
    <property type="project" value="UniProtKB"/>
</dbReference>
<dbReference type="GO" id="GO:0031514">
    <property type="term" value="C:motile cilium"/>
    <property type="evidence" value="ECO:0000318"/>
    <property type="project" value="GO_Central"/>
</dbReference>
<dbReference type="GO" id="GO:0005654">
    <property type="term" value="C:nucleoplasm"/>
    <property type="evidence" value="ECO:0007669"/>
    <property type="project" value="Ensembl"/>
</dbReference>
<dbReference type="GO" id="GO:0036126">
    <property type="term" value="C:sperm flagellum"/>
    <property type="evidence" value="ECO:0000250"/>
    <property type="project" value="UniProtKB"/>
</dbReference>
<dbReference type="GO" id="GO:0060271">
    <property type="term" value="P:cilium assembly"/>
    <property type="evidence" value="ECO:0000250"/>
    <property type="project" value="UniProtKB"/>
</dbReference>
<dbReference type="GO" id="GO:0030317">
    <property type="term" value="P:flagellated sperm motility"/>
    <property type="evidence" value="ECO:0000250"/>
    <property type="project" value="UniProtKB"/>
</dbReference>
<dbReference type="GO" id="GO:2000147">
    <property type="term" value="P:positive regulation of cell motility"/>
    <property type="evidence" value="ECO:0000250"/>
    <property type="project" value="UniProtKB"/>
</dbReference>
<dbReference type="GO" id="GO:2000253">
    <property type="term" value="P:positive regulation of feeding behavior"/>
    <property type="evidence" value="ECO:0000250"/>
    <property type="project" value="UniProtKB"/>
</dbReference>
<dbReference type="GO" id="GO:0018095">
    <property type="term" value="P:protein polyglutamylation"/>
    <property type="evidence" value="ECO:0000250"/>
    <property type="project" value="UniProtKB"/>
</dbReference>
<dbReference type="GO" id="GO:0060296">
    <property type="term" value="P:regulation of cilium beat frequency involved in ciliary motility"/>
    <property type="evidence" value="ECO:0000250"/>
    <property type="project" value="UniProtKB"/>
</dbReference>
<dbReference type="InterPro" id="IPR040441">
    <property type="entry name" value="CFA20/CFAP20DC"/>
</dbReference>
<dbReference type="InterPro" id="IPR007714">
    <property type="entry name" value="CFA20_dom"/>
</dbReference>
<dbReference type="PANTHER" id="PTHR12458">
    <property type="entry name" value="ORF PROTEIN"/>
    <property type="match status" value="1"/>
</dbReference>
<dbReference type="Pfam" id="PF05018">
    <property type="entry name" value="CFA20_dom"/>
    <property type="match status" value="1"/>
</dbReference>
<organism>
    <name type="scientific">Bos taurus</name>
    <name type="common">Bovine</name>
    <dbReference type="NCBI Taxonomy" id="9913"/>
    <lineage>
        <taxon>Eukaryota</taxon>
        <taxon>Metazoa</taxon>
        <taxon>Chordata</taxon>
        <taxon>Craniata</taxon>
        <taxon>Vertebrata</taxon>
        <taxon>Euteleostomi</taxon>
        <taxon>Mammalia</taxon>
        <taxon>Eutheria</taxon>
        <taxon>Laurasiatheria</taxon>
        <taxon>Artiodactyla</taxon>
        <taxon>Ruminantia</taxon>
        <taxon>Pecora</taxon>
        <taxon>Bovidae</taxon>
        <taxon>Bovinae</taxon>
        <taxon>Bos</taxon>
    </lineage>
</organism>
<proteinExistence type="evidence at protein level"/>
<evidence type="ECO:0000250" key="1">
    <source>
        <dbReference type="UniProtKB" id="Q9Y6A4"/>
    </source>
</evidence>
<evidence type="ECO:0000269" key="2">
    <source>
    </source>
</evidence>
<evidence type="ECO:0000269" key="3">
    <source>
    </source>
</evidence>
<evidence type="ECO:0000269" key="4">
    <source>
    </source>
</evidence>
<evidence type="ECO:0000303" key="5">
    <source>
    </source>
</evidence>
<evidence type="ECO:0000305" key="6"/>
<evidence type="ECO:0007744" key="7">
    <source>
        <dbReference type="PDB" id="7RRO"/>
    </source>
</evidence>
<evidence type="ECO:0007744" key="8">
    <source>
        <dbReference type="PDB" id="8OTZ"/>
    </source>
</evidence>
<name>CFA20_BOVIN</name>
<gene>
    <name type="primary">CFAP20</name>
    <name evidence="5" type="synonym">GTL3</name>
</gene>
<protein>
    <recommendedName>
        <fullName>Cilia- and flagella-associated protein 20</fullName>
    </recommendedName>
</protein>
<accession>Q6B857</accession>
<feature type="chain" id="PRO_0000296397" description="Cilia- and flagella-associated protein 20">
    <location>
        <begin position="1"/>
        <end position="193"/>
    </location>
</feature>
<reference key="1">
    <citation type="journal article" date="2005" name="Mol. Reprod. Dev.">
        <title>Specific maternal transcripts in bovine oocytes and cleavaged embryos: identification with novel DDRT-PCR methods.</title>
        <authorList>
            <person name="Hwang K.-C."/>
            <person name="Park S.-Y."/>
            <person name="Park S.-P."/>
            <person name="Lim J.H."/>
            <person name="Cui X.-S."/>
            <person name="Kim N.-H."/>
        </authorList>
    </citation>
    <scope>NUCLEOTIDE SEQUENCE [MRNA]</scope>
    <scope>DEVELOPMENTAL STAGE</scope>
</reference>
<reference key="2">
    <citation type="submission" date="2006-01" db="EMBL/GenBank/DDBJ databases">
        <authorList>
            <consortium name="NIH - Mammalian Gene Collection (MGC) project"/>
        </authorList>
    </citation>
    <scope>NUCLEOTIDE SEQUENCE [LARGE SCALE MRNA]</scope>
    <source>
        <strain>Hereford</strain>
        <tissue>Heart ventricle</tissue>
    </source>
</reference>
<reference evidence="7" key="3">
    <citation type="journal article" date="2021" name="Cell">
        <title>De novo identification of mammalian ciliary motility proteins using cryo-EM.</title>
        <authorList>
            <person name="Gui M."/>
            <person name="Farley H."/>
            <person name="Anujan P."/>
            <person name="Anderson J.R."/>
            <person name="Maxwell D.W."/>
            <person name="Whitchurch J.B."/>
            <person name="Botsch J.J."/>
            <person name="Qiu T."/>
            <person name="Meleppattu S."/>
            <person name="Singh S.K."/>
            <person name="Zhang Q."/>
            <person name="Thompson J."/>
            <person name="Lucas J.S."/>
            <person name="Bingle C.D."/>
            <person name="Norris D.P."/>
            <person name="Roy S."/>
            <person name="Brown A."/>
        </authorList>
    </citation>
    <scope>STRUCTURE BY ELECTRON MICROSCOPY (3.40 ANGSTROMS)</scope>
    <scope>FUNCTION</scope>
    <scope>SUBCELLULAR LOCATION</scope>
    <scope>TISSUE SPECIFICITY</scope>
</reference>
<reference evidence="8" key="4">
    <citation type="journal article" date="2023" name="Cell">
        <title>Structural specializations of the sperm tail.</title>
        <authorList>
            <person name="Leung M.R."/>
            <person name="Zeng J."/>
            <person name="Wang X."/>
            <person name="Roelofs M.C."/>
            <person name="Huang W."/>
            <person name="Zenezini Chiozzi R."/>
            <person name="Hevler J.F."/>
            <person name="Heck A.J.R."/>
            <person name="Dutcher S.K."/>
            <person name="Brown A."/>
            <person name="Zhang R."/>
            <person name="Zeev-Ben-Mordehai T."/>
        </authorList>
    </citation>
    <scope>STRUCTURE BY ELECTRON MICROSCOPY (3.60 ANGSTROMS)</scope>
    <scope>SUBUNIT</scope>
    <scope>SUBCELLULAR LOCATION</scope>
</reference>